<evidence type="ECO:0000250" key="1"/>
<evidence type="ECO:0000250" key="2">
    <source>
        <dbReference type="UniProtKB" id="P02708"/>
    </source>
</evidence>
<evidence type="ECO:0000250" key="3">
    <source>
        <dbReference type="UniProtKB" id="P02709"/>
    </source>
</evidence>
<evidence type="ECO:0000255" key="4"/>
<evidence type="ECO:0000305" key="5"/>
<organism>
    <name type="scientific">Crocidura russula</name>
    <name type="common">Greater white-toothed shrew</name>
    <dbReference type="NCBI Taxonomy" id="36802"/>
    <lineage>
        <taxon>Eukaryota</taxon>
        <taxon>Metazoa</taxon>
        <taxon>Chordata</taxon>
        <taxon>Craniata</taxon>
        <taxon>Vertebrata</taxon>
        <taxon>Euteleostomi</taxon>
        <taxon>Mammalia</taxon>
        <taxon>Eutheria</taxon>
        <taxon>Laurasiatheria</taxon>
        <taxon>Eulipotyphla</taxon>
        <taxon>Soricidae</taxon>
        <taxon>Crocidurinae</taxon>
        <taxon>Crocidura</taxon>
    </lineage>
</organism>
<proteinExistence type="evidence at transcript level"/>
<sequence>AIFKSYCEIIVTHFPFDEQNCSMKLGTWTYDGSKVAINAESEHPDLSNFMESGEWVIKEARGWKHWVFYACCPTTPYLDITYHF</sequence>
<comment type="function">
    <text evidence="2">Upon acetylcholine binding, the AChR responds by an extensive change in conformation that affects all subunits and leads to opening of an ion-conducting channel across the plasma membrane.</text>
</comment>
<comment type="catalytic activity">
    <reaction evidence="3">
        <text>K(+)(in) = K(+)(out)</text>
        <dbReference type="Rhea" id="RHEA:29463"/>
        <dbReference type="ChEBI" id="CHEBI:29103"/>
    </reaction>
</comment>
<comment type="catalytic activity">
    <reaction evidence="3">
        <text>Na(+)(in) = Na(+)(out)</text>
        <dbReference type="Rhea" id="RHEA:34963"/>
        <dbReference type="ChEBI" id="CHEBI:29101"/>
    </reaction>
</comment>
<comment type="subunit">
    <text evidence="2">One of the alpha chains that assemble within the acetylcholine receptor, a pentamer of two alpha chains, a beta, a delta, and a gamma (in immature muscle) or epsilon (in mature muscle) chains. The muscle heteropentamer composed of alpha-1, beta-1, delta, epsilon subunits interacts with the alpha-conotoxin ImII.</text>
</comment>
<comment type="subcellular location">
    <subcellularLocation>
        <location evidence="2">Postsynaptic cell membrane</location>
        <topology evidence="4">Multi-pass membrane protein</topology>
    </subcellularLocation>
    <subcellularLocation>
        <location evidence="2">Cell membrane</location>
        <topology evidence="4">Multi-pass membrane protein</topology>
    </subcellularLocation>
</comment>
<comment type="similarity">
    <text evidence="5">Belongs to the ligand-gated ion channel (TC 1.A.9) family. Acetylcholine receptor (TC 1.A.9.1) subfamily. Alpha-1/CHRNA1 sub-subfamily.</text>
</comment>
<keyword id="KW-1003">Cell membrane</keyword>
<keyword id="KW-1015">Disulfide bond</keyword>
<keyword id="KW-0325">Glycoprotein</keyword>
<keyword id="KW-0407">Ion channel</keyword>
<keyword id="KW-0406">Ion transport</keyword>
<keyword id="KW-1071">Ligand-gated ion channel</keyword>
<keyword id="KW-0472">Membrane</keyword>
<keyword id="KW-0628">Postsynaptic cell membrane</keyword>
<keyword id="KW-0675">Receptor</keyword>
<keyword id="KW-0770">Synapse</keyword>
<keyword id="KW-0812">Transmembrane</keyword>
<keyword id="KW-0813">Transport</keyword>
<accession>P54248</accession>
<feature type="chain" id="PRO_0000076970" description="Acetylcholine receptor subunit alpha">
    <location>
        <begin position="1" status="less than"/>
        <end position="84" status="greater than"/>
    </location>
</feature>
<feature type="glycosylation site" description="N-linked (GlcNAc...) asparagine" evidence="4">
    <location>
        <position position="20"/>
    </location>
</feature>
<feature type="disulfide bond" evidence="1">
    <location>
        <begin position="7"/>
        <end position="21"/>
    </location>
</feature>
<feature type="disulfide bond" description="Associated with receptor activation" evidence="1">
    <location>
        <begin position="71"/>
        <end position="72"/>
    </location>
</feature>
<feature type="non-terminal residue">
    <location>
        <position position="1"/>
    </location>
</feature>
<feature type="non-terminal residue">
    <location>
        <position position="84"/>
    </location>
</feature>
<gene>
    <name type="primary">CHRNA1</name>
</gene>
<reference key="1">
    <citation type="journal article" date="1995" name="Biochemistry">
        <title>The binding site of the nicotinic acetylcholine receptor in animal species resistant to alpha-bungarotoxin.</title>
        <authorList>
            <person name="Barchan D."/>
            <person name="Ovadia M."/>
            <person name="Kochva E."/>
            <person name="Fuchs S."/>
        </authorList>
    </citation>
    <scope>NUCLEOTIDE SEQUENCE [MRNA]</scope>
    <source>
        <tissue>Muscle</tissue>
    </source>
</reference>
<dbReference type="EMBL" id="U17006">
    <property type="protein sequence ID" value="AAA89113.1"/>
    <property type="molecule type" value="mRNA"/>
</dbReference>
<dbReference type="SMR" id="P54248"/>
<dbReference type="GlyCosmos" id="P54248">
    <property type="glycosylation" value="1 site, No reported glycans"/>
</dbReference>
<dbReference type="GO" id="GO:0045211">
    <property type="term" value="C:postsynaptic membrane"/>
    <property type="evidence" value="ECO:0007669"/>
    <property type="project" value="UniProtKB-SubCell"/>
</dbReference>
<dbReference type="GO" id="GO:0005230">
    <property type="term" value="F:extracellular ligand-gated monoatomic ion channel activity"/>
    <property type="evidence" value="ECO:0007669"/>
    <property type="project" value="InterPro"/>
</dbReference>
<dbReference type="GO" id="GO:0004888">
    <property type="term" value="F:transmembrane signaling receptor activity"/>
    <property type="evidence" value="ECO:0007669"/>
    <property type="project" value="InterPro"/>
</dbReference>
<dbReference type="FunFam" id="2.70.170.10:FF:000060">
    <property type="entry name" value="Nicotinic acetylcholine receptor subunit alpha4"/>
    <property type="match status" value="1"/>
</dbReference>
<dbReference type="Gene3D" id="2.70.170.10">
    <property type="entry name" value="Neurotransmitter-gated ion-channel ligand-binding domain"/>
    <property type="match status" value="1"/>
</dbReference>
<dbReference type="InterPro" id="IPR006202">
    <property type="entry name" value="Neur_chan_lig-bd"/>
</dbReference>
<dbReference type="InterPro" id="IPR036734">
    <property type="entry name" value="Neur_chan_lig-bd_sf"/>
</dbReference>
<dbReference type="InterPro" id="IPR006201">
    <property type="entry name" value="Neur_channel"/>
</dbReference>
<dbReference type="InterPro" id="IPR018000">
    <property type="entry name" value="Neurotransmitter_ion_chnl_CS"/>
</dbReference>
<dbReference type="PANTHER" id="PTHR18945">
    <property type="entry name" value="NEUROTRANSMITTER GATED ION CHANNEL"/>
    <property type="match status" value="1"/>
</dbReference>
<dbReference type="Pfam" id="PF02931">
    <property type="entry name" value="Neur_chan_LBD"/>
    <property type="match status" value="1"/>
</dbReference>
<dbReference type="SUPFAM" id="SSF63712">
    <property type="entry name" value="Nicotinic receptor ligand binding domain-like"/>
    <property type="match status" value="1"/>
</dbReference>
<dbReference type="PROSITE" id="PS00236">
    <property type="entry name" value="NEUROTR_ION_CHANNEL"/>
    <property type="match status" value="1"/>
</dbReference>
<name>ACHA_CRORS</name>
<protein>
    <recommendedName>
        <fullName>Acetylcholine receptor subunit alpha</fullName>
    </recommendedName>
</protein>